<comment type="function">
    <text evidence="1 6">Probable transcriptional activator involved in uracil catabolism.</text>
</comment>
<comment type="subcellular location">
    <subcellularLocation>
        <location evidence="4">Cytoplasm</location>
    </subcellularLocation>
    <subcellularLocation>
        <location evidence="2 4">Nucleus</location>
    </subcellularLocation>
</comment>
<comment type="miscellaneous">
    <text evidence="5">Present with 937 molecules/cell in log phase SD medium.</text>
</comment>
<comment type="similarity">
    <text evidence="7">Belongs to the URC2 family.</text>
</comment>
<protein>
    <recommendedName>
        <fullName>Uracil catabolism protein 2</fullName>
    </recommendedName>
</protein>
<keyword id="KW-0010">Activator</keyword>
<keyword id="KW-0963">Cytoplasm</keyword>
<keyword id="KW-0205">Cytosine metabolism</keyword>
<keyword id="KW-0238">DNA-binding</keyword>
<keyword id="KW-0479">Metal-binding</keyword>
<keyword id="KW-0546">Nucleotide metabolism</keyword>
<keyword id="KW-0539">Nucleus</keyword>
<keyword id="KW-1185">Reference proteome</keyword>
<keyword id="KW-0804">Transcription</keyword>
<keyword id="KW-0805">Transcription regulation</keyword>
<keyword id="KW-0862">Zinc</keyword>
<name>URC2_YEAST</name>
<reference key="1">
    <citation type="journal article" date="1997" name="Nature">
        <title>The nucleotide sequence of Saccharomyces cerevisiae chromosome IV.</title>
        <authorList>
            <person name="Jacq C."/>
            <person name="Alt-Moerbe J."/>
            <person name="Andre B."/>
            <person name="Arnold W."/>
            <person name="Bahr A."/>
            <person name="Ballesta J.P.G."/>
            <person name="Bargues M."/>
            <person name="Baron L."/>
            <person name="Becker A."/>
            <person name="Biteau N."/>
            <person name="Bloecker H."/>
            <person name="Blugeon C."/>
            <person name="Boskovic J."/>
            <person name="Brandt P."/>
            <person name="Brueckner M."/>
            <person name="Buitrago M.J."/>
            <person name="Coster F."/>
            <person name="Delaveau T."/>
            <person name="del Rey F."/>
            <person name="Dujon B."/>
            <person name="Eide L.G."/>
            <person name="Garcia-Cantalejo J.M."/>
            <person name="Goffeau A."/>
            <person name="Gomez-Peris A."/>
            <person name="Granotier C."/>
            <person name="Hanemann V."/>
            <person name="Hankeln T."/>
            <person name="Hoheisel J.D."/>
            <person name="Jaeger W."/>
            <person name="Jimenez A."/>
            <person name="Jonniaux J.-L."/>
            <person name="Kraemer C."/>
            <person name="Kuester H."/>
            <person name="Laamanen P."/>
            <person name="Legros Y."/>
            <person name="Louis E.J."/>
            <person name="Moeller-Rieker S."/>
            <person name="Monnet A."/>
            <person name="Moro M."/>
            <person name="Mueller-Auer S."/>
            <person name="Nussbaumer B."/>
            <person name="Paricio N."/>
            <person name="Paulin L."/>
            <person name="Perea J."/>
            <person name="Perez-Alonso M."/>
            <person name="Perez-Ortin J.E."/>
            <person name="Pohl T.M."/>
            <person name="Prydz H."/>
            <person name="Purnelle B."/>
            <person name="Rasmussen S.W."/>
            <person name="Remacha M.A."/>
            <person name="Revuelta J.L."/>
            <person name="Rieger M."/>
            <person name="Salom D."/>
            <person name="Saluz H.P."/>
            <person name="Saiz J.E."/>
            <person name="Saren A.-M."/>
            <person name="Schaefer M."/>
            <person name="Scharfe M."/>
            <person name="Schmidt E.R."/>
            <person name="Schneider C."/>
            <person name="Scholler P."/>
            <person name="Schwarz S."/>
            <person name="Soler-Mira A."/>
            <person name="Urrestarazu L.A."/>
            <person name="Verhasselt P."/>
            <person name="Vissers S."/>
            <person name="Voet M."/>
            <person name="Volckaert G."/>
            <person name="Wagner G."/>
            <person name="Wambutt R."/>
            <person name="Wedler E."/>
            <person name="Wedler H."/>
            <person name="Woelfl S."/>
            <person name="Harris D.E."/>
            <person name="Bowman S."/>
            <person name="Brown D."/>
            <person name="Churcher C.M."/>
            <person name="Connor R."/>
            <person name="Dedman K."/>
            <person name="Gentles S."/>
            <person name="Hamlin N."/>
            <person name="Hunt S."/>
            <person name="Jones L."/>
            <person name="McDonald S."/>
            <person name="Murphy L.D."/>
            <person name="Niblett D."/>
            <person name="Odell C."/>
            <person name="Oliver K."/>
            <person name="Rajandream M.A."/>
            <person name="Richards C."/>
            <person name="Shore L."/>
            <person name="Walsh S.V."/>
            <person name="Barrell B.G."/>
            <person name="Dietrich F.S."/>
            <person name="Mulligan J.T."/>
            <person name="Allen E."/>
            <person name="Araujo R."/>
            <person name="Aviles E."/>
            <person name="Berno A."/>
            <person name="Carpenter J."/>
            <person name="Chen E."/>
            <person name="Cherry J.M."/>
            <person name="Chung E."/>
            <person name="Duncan M."/>
            <person name="Hunicke-Smith S."/>
            <person name="Hyman R.W."/>
            <person name="Komp C."/>
            <person name="Lashkari D."/>
            <person name="Lew H."/>
            <person name="Lin D."/>
            <person name="Mosedale D."/>
            <person name="Nakahara K."/>
            <person name="Namath A."/>
            <person name="Oefner P."/>
            <person name="Oh C."/>
            <person name="Petel F.X."/>
            <person name="Roberts D."/>
            <person name="Schramm S."/>
            <person name="Schroeder M."/>
            <person name="Shogren T."/>
            <person name="Shroff N."/>
            <person name="Winant A."/>
            <person name="Yelton M.A."/>
            <person name="Botstein D."/>
            <person name="Davis R.W."/>
            <person name="Johnston M."/>
            <person name="Andrews S."/>
            <person name="Brinkman R."/>
            <person name="Cooper J."/>
            <person name="Ding H."/>
            <person name="Du Z."/>
            <person name="Favello A."/>
            <person name="Fulton L."/>
            <person name="Gattung S."/>
            <person name="Greco T."/>
            <person name="Hallsworth K."/>
            <person name="Hawkins J."/>
            <person name="Hillier L.W."/>
            <person name="Jier M."/>
            <person name="Johnson D."/>
            <person name="Johnston L."/>
            <person name="Kirsten J."/>
            <person name="Kucaba T."/>
            <person name="Langston Y."/>
            <person name="Latreille P."/>
            <person name="Le T."/>
            <person name="Mardis E."/>
            <person name="Menezes S."/>
            <person name="Miller N."/>
            <person name="Nhan M."/>
            <person name="Pauley A."/>
            <person name="Peluso D."/>
            <person name="Rifkin L."/>
            <person name="Riles L."/>
            <person name="Taich A."/>
            <person name="Trevaskis E."/>
            <person name="Vignati D."/>
            <person name="Wilcox L."/>
            <person name="Wohldman P."/>
            <person name="Vaudin M."/>
            <person name="Wilson R."/>
            <person name="Waterston R."/>
            <person name="Albermann K."/>
            <person name="Hani J."/>
            <person name="Heumann K."/>
            <person name="Kleine K."/>
            <person name="Mewes H.-W."/>
            <person name="Zollner A."/>
            <person name="Zaccaria P."/>
        </authorList>
    </citation>
    <scope>NUCLEOTIDE SEQUENCE [LARGE SCALE GENOMIC DNA]</scope>
    <source>
        <strain>ATCC 204508 / S288c</strain>
    </source>
</reference>
<reference key="2">
    <citation type="journal article" date="2014" name="G3 (Bethesda)">
        <title>The reference genome sequence of Saccharomyces cerevisiae: Then and now.</title>
        <authorList>
            <person name="Engel S.R."/>
            <person name="Dietrich F.S."/>
            <person name="Fisk D.G."/>
            <person name="Binkley G."/>
            <person name="Balakrishnan R."/>
            <person name="Costanzo M.C."/>
            <person name="Dwight S.S."/>
            <person name="Hitz B.C."/>
            <person name="Karra K."/>
            <person name="Nash R.S."/>
            <person name="Weng S."/>
            <person name="Wong E.D."/>
            <person name="Lloyd P."/>
            <person name="Skrzypek M.S."/>
            <person name="Miyasato S.R."/>
            <person name="Simison M."/>
            <person name="Cherry J.M."/>
        </authorList>
    </citation>
    <scope>GENOME REANNOTATION</scope>
    <source>
        <strain>ATCC 204508 / S288c</strain>
    </source>
</reference>
<reference key="3">
    <citation type="journal article" date="2007" name="Genome Res.">
        <title>Approaching a complete repository of sequence-verified protein-encoding clones for Saccharomyces cerevisiae.</title>
        <authorList>
            <person name="Hu Y."/>
            <person name="Rolfs A."/>
            <person name="Bhullar B."/>
            <person name="Murthy T.V.S."/>
            <person name="Zhu C."/>
            <person name="Berger M.F."/>
            <person name="Camargo A.A."/>
            <person name="Kelley F."/>
            <person name="McCarron S."/>
            <person name="Jepson D."/>
            <person name="Richardson A."/>
            <person name="Raphael J."/>
            <person name="Moreira D."/>
            <person name="Taycher E."/>
            <person name="Zuo D."/>
            <person name="Mohr S."/>
            <person name="Kane M.F."/>
            <person name="Williamson J."/>
            <person name="Simpson A.J.G."/>
            <person name="Bulyk M.L."/>
            <person name="Harlow E."/>
            <person name="Marsischky G."/>
            <person name="Kolodner R.D."/>
            <person name="LaBaer J."/>
        </authorList>
    </citation>
    <scope>NUCLEOTIDE SEQUENCE [GENOMIC DNA]</scope>
    <source>
        <strain>ATCC 204508 / S288c</strain>
    </source>
</reference>
<reference key="4">
    <citation type="journal article" date="2003" name="Nature">
        <title>Global analysis of protein localization in budding yeast.</title>
        <authorList>
            <person name="Huh W.-K."/>
            <person name="Falvo J.V."/>
            <person name="Gerke L.C."/>
            <person name="Carroll A.S."/>
            <person name="Howson R.W."/>
            <person name="Weissman J.S."/>
            <person name="O'Shea E.K."/>
        </authorList>
    </citation>
    <scope>SUBCELLULAR LOCATION [LARGE SCALE ANALYSIS]</scope>
</reference>
<reference key="5">
    <citation type="journal article" date="2003" name="Nature">
        <title>Global analysis of protein expression in yeast.</title>
        <authorList>
            <person name="Ghaemmaghami S."/>
            <person name="Huh W.-K."/>
            <person name="Bower K."/>
            <person name="Howson R.W."/>
            <person name="Belle A."/>
            <person name="Dephoure N."/>
            <person name="O'Shea E.K."/>
            <person name="Weissman J.S."/>
        </authorList>
    </citation>
    <scope>LEVEL OF PROTEIN EXPRESSION [LARGE SCALE ANALYSIS]</scope>
</reference>
<reference key="6">
    <citation type="journal article" date="2006" name="Nucleic Acids Res.">
        <title>Transcriptional activators in yeast.</title>
        <authorList>
            <person name="Titz B."/>
            <person name="Thomas S."/>
            <person name="Rajagopala S.V."/>
            <person name="Chiba T."/>
            <person name="Ito T."/>
            <person name="Uetz P."/>
        </authorList>
    </citation>
    <scope>FUNCTION</scope>
</reference>
<accession>Q04411</accession>
<accession>D6VTE1</accession>
<organism>
    <name type="scientific">Saccharomyces cerevisiae (strain ATCC 204508 / S288c)</name>
    <name type="common">Baker's yeast</name>
    <dbReference type="NCBI Taxonomy" id="559292"/>
    <lineage>
        <taxon>Eukaryota</taxon>
        <taxon>Fungi</taxon>
        <taxon>Dikarya</taxon>
        <taxon>Ascomycota</taxon>
        <taxon>Saccharomycotina</taxon>
        <taxon>Saccharomycetes</taxon>
        <taxon>Saccharomycetales</taxon>
        <taxon>Saccharomycetaceae</taxon>
        <taxon>Saccharomyces</taxon>
    </lineage>
</organism>
<gene>
    <name type="primary">URC2</name>
    <name type="ordered locus">YDR520C</name>
</gene>
<feature type="chain" id="PRO_0000253827" description="Uracil catabolism protein 2">
    <location>
        <begin position="1"/>
        <end position="772"/>
    </location>
</feature>
<feature type="DNA-binding region" description="Zn(2)-C6 fungal-type" evidence="2">
    <location>
        <begin position="72"/>
        <end position="101"/>
    </location>
</feature>
<feature type="region of interest" description="Disordered" evidence="3">
    <location>
        <begin position="1"/>
        <end position="70"/>
    </location>
</feature>
<feature type="compositionally biased region" description="Basic and acidic residues" evidence="3">
    <location>
        <begin position="39"/>
        <end position="51"/>
    </location>
</feature>
<feature type="compositionally biased region" description="Basic residues" evidence="3">
    <location>
        <begin position="59"/>
        <end position="69"/>
    </location>
</feature>
<sequence length="772" mass="88648">MDINSNASVSPRPDGLPMTAGYNSASGKVRNSIRSIINHPEDSARAKERSETNSPKNNGNKKPRKKRKTFSCDTCRRVKTRCDFEPFIGKCYRCNVLQLDCSLARNKDNEILNTLREDGLLKKINSINHNLGSFSHLNADSPNESQSSFEKNGTVNFDNYMIDKRLSSLEEHIKSLHQKMDLIITTAKMSYNSDIKGPGDDIQNVDFSSNKTYDSRLTSGSETIRKTGEYRKENLFLNGFKLKESPLKLLHDIDERLFPSKATSKAAKLAGQQRPYAVARVNFLHFYENNQELCHKLAKEFLVRSHFWIIPGGRKEIDVEYAHSHLFITSVFTIIAMSFADNDKYAAEQEILYPLVERLLTNTLTMFEKLTAFDIEAILYCCMFHISRKAKRYRQLKFNSLVLSNFALNSLLHVIDFYQIKDRVLVKEVYNPEDLYHLRILNSLTACYLEYSISYGDIREQDDMLKEFNKLVAKFPQANFGDDIKISEINLGDIVNGIFINLKNYFAQCLDDFNNDRYGGNADTFIFVFPELNYWLKNWEELLAKDGAGVLLFTFDFYHIMICRTFITEFSSTLKSNQRFLKLILNTMKEHSFSLLNGFLRLPPTLIRGAPIFTCHQLVYACLTLCDYLYWFDSSERQRVLSLCTKVYWHLSTIGEKMNEATDNVGKIIKSIIDTSKTRINFGSLSKENSDNDKMSTNANNYTGAGNLHAAKPATSPTNVGTLHENLSSSHFMIPDVDQFNSFEDFFQDFFDSLKPNSQKMFTSDKKTEQTT</sequence>
<dbReference type="EMBL" id="U33057">
    <property type="protein sequence ID" value="AAB64961.1"/>
    <property type="molecule type" value="Genomic_DNA"/>
</dbReference>
<dbReference type="EMBL" id="AY692719">
    <property type="protein sequence ID" value="AAT92738.1"/>
    <property type="molecule type" value="Genomic_DNA"/>
</dbReference>
<dbReference type="EMBL" id="BK006938">
    <property type="protein sequence ID" value="DAA12351.1"/>
    <property type="molecule type" value="Genomic_DNA"/>
</dbReference>
<dbReference type="PIR" id="S69577">
    <property type="entry name" value="S69577"/>
</dbReference>
<dbReference type="RefSeq" id="NP_010808.3">
    <property type="nucleotide sequence ID" value="NM_001180828.3"/>
</dbReference>
<dbReference type="SMR" id="Q04411"/>
<dbReference type="BioGRID" id="32571">
    <property type="interactions" value="115"/>
</dbReference>
<dbReference type="DIP" id="DIP-4849N"/>
<dbReference type="FunCoup" id="Q04411">
    <property type="interactions" value="371"/>
</dbReference>
<dbReference type="IntAct" id="Q04411">
    <property type="interactions" value="11"/>
</dbReference>
<dbReference type="MINT" id="Q04411"/>
<dbReference type="STRING" id="4932.YDR520C"/>
<dbReference type="iPTMnet" id="Q04411"/>
<dbReference type="PaxDb" id="4932-YDR520C"/>
<dbReference type="PeptideAtlas" id="Q04411"/>
<dbReference type="EnsemblFungi" id="YDR520C_mRNA">
    <property type="protein sequence ID" value="YDR520C"/>
    <property type="gene ID" value="YDR520C"/>
</dbReference>
<dbReference type="GeneID" id="852133"/>
<dbReference type="KEGG" id="sce:YDR520C"/>
<dbReference type="AGR" id="SGD:S000002928"/>
<dbReference type="SGD" id="S000002928">
    <property type="gene designation" value="URC2"/>
</dbReference>
<dbReference type="VEuPathDB" id="FungiDB:YDR520C"/>
<dbReference type="eggNOG" id="ENOG502QU5T">
    <property type="taxonomic scope" value="Eukaryota"/>
</dbReference>
<dbReference type="HOGENOM" id="CLU_020222_0_0_1"/>
<dbReference type="InParanoid" id="Q04411"/>
<dbReference type="OMA" id="HFWIIPG"/>
<dbReference type="OrthoDB" id="2595934at2759"/>
<dbReference type="BioCyc" id="YEAST:G3O-30037-MONOMER"/>
<dbReference type="BioGRID-ORCS" id="852133">
    <property type="hits" value="0 hits in 13 CRISPR screens"/>
</dbReference>
<dbReference type="PRO" id="PR:Q04411"/>
<dbReference type="Proteomes" id="UP000002311">
    <property type="component" value="Chromosome IV"/>
</dbReference>
<dbReference type="RNAct" id="Q04411">
    <property type="molecule type" value="protein"/>
</dbReference>
<dbReference type="GO" id="GO:0005737">
    <property type="term" value="C:cytoplasm"/>
    <property type="evidence" value="ECO:0007005"/>
    <property type="project" value="SGD"/>
</dbReference>
<dbReference type="GO" id="GO:0005634">
    <property type="term" value="C:nucleus"/>
    <property type="evidence" value="ECO:0007005"/>
    <property type="project" value="SGD"/>
</dbReference>
<dbReference type="GO" id="GO:0000981">
    <property type="term" value="F:DNA-binding transcription factor activity, RNA polymerase II-specific"/>
    <property type="evidence" value="ECO:0007669"/>
    <property type="project" value="InterPro"/>
</dbReference>
<dbReference type="GO" id="GO:0043565">
    <property type="term" value="F:sequence-specific DNA binding"/>
    <property type="evidence" value="ECO:0007005"/>
    <property type="project" value="SGD"/>
</dbReference>
<dbReference type="GO" id="GO:0008270">
    <property type="term" value="F:zinc ion binding"/>
    <property type="evidence" value="ECO:0007669"/>
    <property type="project" value="InterPro"/>
</dbReference>
<dbReference type="GO" id="GO:0019858">
    <property type="term" value="P:cytosine metabolic process"/>
    <property type="evidence" value="ECO:0007669"/>
    <property type="project" value="UniProtKB-KW"/>
</dbReference>
<dbReference type="GO" id="GO:0009117">
    <property type="term" value="P:nucleotide metabolic process"/>
    <property type="evidence" value="ECO:0007669"/>
    <property type="project" value="UniProtKB-KW"/>
</dbReference>
<dbReference type="GO" id="GO:0006212">
    <property type="term" value="P:uracil catabolic process"/>
    <property type="evidence" value="ECO:0000250"/>
    <property type="project" value="SGD"/>
</dbReference>
<dbReference type="CDD" id="cd00067">
    <property type="entry name" value="GAL4"/>
    <property type="match status" value="1"/>
</dbReference>
<dbReference type="Gene3D" id="4.10.240.10">
    <property type="entry name" value="Zn(2)-C6 fungal-type DNA-binding domain"/>
    <property type="match status" value="1"/>
</dbReference>
<dbReference type="InterPro" id="IPR050797">
    <property type="entry name" value="Carb_Metab_Trans_Reg"/>
</dbReference>
<dbReference type="InterPro" id="IPR036864">
    <property type="entry name" value="Zn2-C6_fun-type_DNA-bd_sf"/>
</dbReference>
<dbReference type="InterPro" id="IPR001138">
    <property type="entry name" value="Zn2Cys6_DnaBD"/>
</dbReference>
<dbReference type="PANTHER" id="PTHR31668">
    <property type="entry name" value="GLUCOSE TRANSPORT TRANSCRIPTION REGULATOR RGT1-RELATED-RELATED"/>
    <property type="match status" value="1"/>
</dbReference>
<dbReference type="PANTHER" id="PTHR31668:SF9">
    <property type="entry name" value="URACIL CATABOLISM PROTEIN 2"/>
    <property type="match status" value="1"/>
</dbReference>
<dbReference type="Pfam" id="PF00172">
    <property type="entry name" value="Zn_clus"/>
    <property type="match status" value="1"/>
</dbReference>
<dbReference type="SMART" id="SM00066">
    <property type="entry name" value="GAL4"/>
    <property type="match status" value="1"/>
</dbReference>
<dbReference type="SUPFAM" id="SSF57701">
    <property type="entry name" value="Zn2/Cys6 DNA-binding domain"/>
    <property type="match status" value="1"/>
</dbReference>
<dbReference type="PROSITE" id="PS00463">
    <property type="entry name" value="ZN2_CY6_FUNGAL_1"/>
    <property type="match status" value="1"/>
</dbReference>
<dbReference type="PROSITE" id="PS50048">
    <property type="entry name" value="ZN2_CY6_FUNGAL_2"/>
    <property type="match status" value="1"/>
</dbReference>
<proteinExistence type="evidence at protein level"/>
<evidence type="ECO:0000250" key="1"/>
<evidence type="ECO:0000255" key="2">
    <source>
        <dbReference type="PROSITE-ProRule" id="PRU00227"/>
    </source>
</evidence>
<evidence type="ECO:0000256" key="3">
    <source>
        <dbReference type="SAM" id="MobiDB-lite"/>
    </source>
</evidence>
<evidence type="ECO:0000269" key="4">
    <source>
    </source>
</evidence>
<evidence type="ECO:0000269" key="5">
    <source>
    </source>
</evidence>
<evidence type="ECO:0000269" key="6">
    <source>
    </source>
</evidence>
<evidence type="ECO:0000305" key="7"/>